<proteinExistence type="inferred from homology"/>
<accession>P08891</accession>
<comment type="catalytic activity">
    <reaction evidence="1">
        <text>(2R)-3-phosphoglycerate + ATP = (2R)-3-phospho-glyceroyl phosphate + ADP</text>
        <dbReference type="Rhea" id="RHEA:14801"/>
        <dbReference type="ChEBI" id="CHEBI:30616"/>
        <dbReference type="ChEBI" id="CHEBI:57604"/>
        <dbReference type="ChEBI" id="CHEBI:58272"/>
        <dbReference type="ChEBI" id="CHEBI:456216"/>
        <dbReference type="EC" id="2.7.2.3"/>
    </reaction>
</comment>
<comment type="cofactor">
    <cofactor evidence="2">
        <name>Mg(2+)</name>
        <dbReference type="ChEBI" id="CHEBI:18420"/>
    </cofactor>
</comment>
<comment type="pathway">
    <text>Carbohydrate degradation; glycolysis; pyruvate from D-glyceraldehyde 3-phosphate: step 2/5.</text>
</comment>
<comment type="subunit">
    <text>Monomer.</text>
</comment>
<comment type="miscellaneous">
    <text>In T.brucei, three genes code for phosphoglycerate kinase isozymes, which are transported to different cell compartments.</text>
</comment>
<comment type="similarity">
    <text evidence="4">Belongs to the phosphoglycerate kinase family.</text>
</comment>
<dbReference type="EC" id="2.7.2.3" evidence="1"/>
<dbReference type="EMBL" id="X05889">
    <property type="protein sequence ID" value="CAA29316.1"/>
    <property type="molecule type" value="Genomic_DNA"/>
</dbReference>
<dbReference type="PIR" id="S00748">
    <property type="entry name" value="TVUT2B"/>
</dbReference>
<dbReference type="SMR" id="P08891"/>
<dbReference type="UniPathway" id="UPA00109">
    <property type="reaction ID" value="UER00185"/>
</dbReference>
<dbReference type="GO" id="GO:0005829">
    <property type="term" value="C:cytosol"/>
    <property type="evidence" value="ECO:0007669"/>
    <property type="project" value="TreeGrafter"/>
</dbReference>
<dbReference type="GO" id="GO:0043531">
    <property type="term" value="F:ADP binding"/>
    <property type="evidence" value="ECO:0007669"/>
    <property type="project" value="TreeGrafter"/>
</dbReference>
<dbReference type="GO" id="GO:0005524">
    <property type="term" value="F:ATP binding"/>
    <property type="evidence" value="ECO:0007669"/>
    <property type="project" value="UniProtKB-KW"/>
</dbReference>
<dbReference type="GO" id="GO:0046872">
    <property type="term" value="F:metal ion binding"/>
    <property type="evidence" value="ECO:0007669"/>
    <property type="project" value="UniProtKB-KW"/>
</dbReference>
<dbReference type="GO" id="GO:0004618">
    <property type="term" value="F:phosphoglycerate kinase activity"/>
    <property type="evidence" value="ECO:0007669"/>
    <property type="project" value="UniProtKB-EC"/>
</dbReference>
<dbReference type="GO" id="GO:0006094">
    <property type="term" value="P:gluconeogenesis"/>
    <property type="evidence" value="ECO:0007669"/>
    <property type="project" value="TreeGrafter"/>
</dbReference>
<dbReference type="GO" id="GO:0006096">
    <property type="term" value="P:glycolytic process"/>
    <property type="evidence" value="ECO:0007669"/>
    <property type="project" value="UniProtKB-UniPathway"/>
</dbReference>
<dbReference type="CDD" id="cd00318">
    <property type="entry name" value="Phosphoglycerate_kinase"/>
    <property type="match status" value="1"/>
</dbReference>
<dbReference type="FunFam" id="3.40.50.1260:FF:000001">
    <property type="entry name" value="Phosphoglycerate kinase"/>
    <property type="match status" value="1"/>
</dbReference>
<dbReference type="FunFam" id="3.40.50.1260:FF:000026">
    <property type="entry name" value="Phosphoglycerate kinase A"/>
    <property type="match status" value="1"/>
</dbReference>
<dbReference type="FunFam" id="3.40.50.1260:FF:000027">
    <property type="entry name" value="Phosphoglycerate kinase A"/>
    <property type="match status" value="1"/>
</dbReference>
<dbReference type="Gene3D" id="3.40.50.1260">
    <property type="entry name" value="Phosphoglycerate kinase, N-terminal domain"/>
    <property type="match status" value="3"/>
</dbReference>
<dbReference type="HAMAP" id="MF_00145">
    <property type="entry name" value="Phosphoglyc_kinase"/>
    <property type="match status" value="1"/>
</dbReference>
<dbReference type="InterPro" id="IPR027250">
    <property type="entry name" value="Pgk_euglenozoa"/>
</dbReference>
<dbReference type="InterPro" id="IPR001576">
    <property type="entry name" value="Phosphoglycerate_kinase"/>
</dbReference>
<dbReference type="InterPro" id="IPR015911">
    <property type="entry name" value="Phosphoglycerate_kinase_CS"/>
</dbReference>
<dbReference type="InterPro" id="IPR015824">
    <property type="entry name" value="Phosphoglycerate_kinase_N"/>
</dbReference>
<dbReference type="InterPro" id="IPR036043">
    <property type="entry name" value="Phosphoglycerate_kinase_sf"/>
</dbReference>
<dbReference type="PANTHER" id="PTHR11406">
    <property type="entry name" value="PHOSPHOGLYCERATE KINASE"/>
    <property type="match status" value="1"/>
</dbReference>
<dbReference type="PANTHER" id="PTHR11406:SF23">
    <property type="entry name" value="PHOSPHOGLYCERATE KINASE 1, CHLOROPLASTIC-RELATED"/>
    <property type="match status" value="1"/>
</dbReference>
<dbReference type="Pfam" id="PF00162">
    <property type="entry name" value="PGK"/>
    <property type="match status" value="1"/>
</dbReference>
<dbReference type="PIRSF" id="PIRSF000724">
    <property type="entry name" value="Pgk"/>
    <property type="match status" value="1"/>
</dbReference>
<dbReference type="PIRSF" id="PIRSF500126">
    <property type="entry name" value="Pgk_euglenozoa"/>
    <property type="match status" value="1"/>
</dbReference>
<dbReference type="PRINTS" id="PR00477">
    <property type="entry name" value="PHGLYCKINASE"/>
</dbReference>
<dbReference type="SUPFAM" id="SSF53748">
    <property type="entry name" value="Phosphoglycerate kinase"/>
    <property type="match status" value="1"/>
</dbReference>
<dbReference type="PROSITE" id="PS00111">
    <property type="entry name" value="PGLYCERATE_KINASE"/>
    <property type="match status" value="1"/>
</dbReference>
<name>PGKA_TRYBB</name>
<organism>
    <name type="scientific">Trypanosoma brucei brucei</name>
    <dbReference type="NCBI Taxonomy" id="5702"/>
    <lineage>
        <taxon>Eukaryota</taxon>
        <taxon>Discoba</taxon>
        <taxon>Euglenozoa</taxon>
        <taxon>Kinetoplastea</taxon>
        <taxon>Metakinetoplastina</taxon>
        <taxon>Trypanosomatida</taxon>
        <taxon>Trypanosomatidae</taxon>
        <taxon>Trypanosoma</taxon>
    </lineage>
</organism>
<protein>
    <recommendedName>
        <fullName>Phosphoglycerate kinase A</fullName>
        <ecNumber evidence="1">2.7.2.3</ecNumber>
    </recommendedName>
    <alternativeName>
        <fullName>PGK A allele 2</fullName>
    </alternativeName>
</protein>
<reference key="1">
    <citation type="journal article" date="1988" name="J. Mol. Biol.">
        <title>Evidence for gene conversion between the phosphoglycerate kinase genes of Trypanosoma brucei.</title>
        <authorList>
            <person name="le Blancq S.M."/>
            <person name="Swinkels B.W."/>
            <person name="Gibson W.C."/>
            <person name="Borst P."/>
        </authorList>
    </citation>
    <scope>NUCLEOTIDE SEQUENCE [GENOMIC DNA]</scope>
</reference>
<sequence length="505" mass="55376">MSTAPNAKNNISLKKSVGDVWPLTAKRVLMRVDFNVPMQNGHITNDYRIRAAIPTIRRVIDQGGICILLSHLGRPRGVSMVAGVRDIRRRYHEAQFHDNKGKTAFFSVLPGEEKVKILAKSSAREEATHISPEVKSGKTMLFARLPEDEKKSLLMQYLNENKDSALPQMSVSAGYEEQYSLRPVAVRLAELLGQHVYFAHDCLDARVEVSRLKRGNVMLLENVRFYSEENGENAEEREAMAKILASYGDVYISDAFGAAHRDSATMTGIPKILGHGAAGYLMEKEISYFAKVLGNPPRPLEAIVGGAKVSEKIQLLDNMKQRIDYLLIGGAMAYTFLKAQGYSIGKSKCEESKLEFARSLLKKAEDRKVQVILPIDHVCHTEFKAVDSPLITEDQNIPEGHMALDIGPKTIEKYVQTIGKCKSAIWNGPMGVFEMVPYSKGTFAIAKAMGRGTQKRGLMSIIGGGESAGAAEAARISHVSTGGGASLELLEGKTLPGVAVLDDKE</sequence>
<keyword id="KW-0067">ATP-binding</keyword>
<keyword id="KW-0324">Glycolysis</keyword>
<keyword id="KW-0418">Kinase</keyword>
<keyword id="KW-0460">Magnesium</keyword>
<keyword id="KW-0479">Metal-binding</keyword>
<keyword id="KW-0547">Nucleotide-binding</keyword>
<keyword id="KW-0808">Transferase</keyword>
<feature type="chain" id="PRO_0000145862" description="Phosphoglycerate kinase A">
    <location>
        <begin position="1"/>
        <end position="505"/>
    </location>
</feature>
<feature type="binding site" evidence="1">
    <location>
        <position position="32"/>
    </location>
    <ligand>
        <name>(2R)-3-phosphoglycerate</name>
        <dbReference type="ChEBI" id="CHEBI:58272"/>
    </ligand>
</feature>
<feature type="binding site" evidence="3">
    <location>
        <position position="33"/>
    </location>
    <ligand>
        <name>(2R)-3-phosphoglycerate</name>
        <dbReference type="ChEBI" id="CHEBI:58272"/>
    </ligand>
</feature>
<feature type="binding site" evidence="1">
    <location>
        <position position="34"/>
    </location>
    <ligand>
        <name>(2R)-3-phosphoglycerate</name>
        <dbReference type="ChEBI" id="CHEBI:58272"/>
    </ligand>
</feature>
<feature type="binding site" evidence="3">
    <location>
        <position position="35"/>
    </location>
    <ligand>
        <name>(2R)-3-phosphoglycerate</name>
        <dbReference type="ChEBI" id="CHEBI:58272"/>
    </ligand>
</feature>
<feature type="binding site" evidence="3">
    <location>
        <position position="48"/>
    </location>
    <ligand>
        <name>(2R)-3-phosphoglycerate</name>
        <dbReference type="ChEBI" id="CHEBI:58272"/>
    </ligand>
</feature>
<feature type="binding site" evidence="1">
    <location>
        <position position="70"/>
    </location>
    <ligand>
        <name>(2R)-3-phosphoglycerate</name>
        <dbReference type="ChEBI" id="CHEBI:58272"/>
    </ligand>
</feature>
<feature type="binding site" evidence="3">
    <location>
        <position position="71"/>
    </location>
    <ligand>
        <name>(2R)-3-phosphoglycerate</name>
        <dbReference type="ChEBI" id="CHEBI:58272"/>
    </ligand>
</feature>
<feature type="binding site" evidence="1">
    <location>
        <position position="73"/>
    </location>
    <ligand>
        <name>(2R)-3-phosphoglycerate</name>
        <dbReference type="ChEBI" id="CHEBI:58272"/>
    </ligand>
</feature>
<feature type="binding site" evidence="3">
    <location>
        <position position="74"/>
    </location>
    <ligand>
        <name>(2R)-3-phosphoglycerate</name>
        <dbReference type="ChEBI" id="CHEBI:58272"/>
    </ligand>
</feature>
<feature type="binding site" evidence="3">
    <location>
        <position position="224"/>
    </location>
    <ligand>
        <name>(2R)-3-phosphoglycerate</name>
        <dbReference type="ChEBI" id="CHEBI:58272"/>
    </ligand>
</feature>
<feature type="binding site" evidence="1">
    <location>
        <position position="260"/>
    </location>
    <ligand>
        <name>(2R)-3-phosphoglycerate</name>
        <dbReference type="ChEBI" id="CHEBI:58272"/>
    </ligand>
</feature>
<feature type="binding site" evidence="3">
    <location>
        <position position="261"/>
    </location>
    <ligand>
        <name>(2R)-3-phosphoglycerate</name>
        <dbReference type="ChEBI" id="CHEBI:58272"/>
    </ligand>
</feature>
<feature type="binding site" evidence="1">
    <location>
        <position position="306"/>
    </location>
    <ligand>
        <name>ADP</name>
        <dbReference type="ChEBI" id="CHEBI:456216"/>
    </ligand>
</feature>
<feature type="binding site" evidence="1">
    <location>
        <position position="306"/>
    </location>
    <ligand>
        <name>CDP</name>
        <dbReference type="ChEBI" id="CHEBI:58069"/>
    </ligand>
</feature>
<feature type="binding site" evidence="2">
    <location>
        <position position="307"/>
    </location>
    <ligand>
        <name>ADP</name>
        <dbReference type="ChEBI" id="CHEBI:456216"/>
    </ligand>
</feature>
<feature type="binding site" evidence="3">
    <location>
        <position position="307"/>
    </location>
    <ligand>
        <name>AMP</name>
        <dbReference type="ChEBI" id="CHEBI:456215"/>
    </ligand>
</feature>
<feature type="binding site" evidence="3">
    <location>
        <position position="307"/>
    </location>
    <ligand>
        <name>ATP</name>
        <dbReference type="ChEBI" id="CHEBI:30616"/>
    </ligand>
</feature>
<feature type="binding site" evidence="1">
    <location>
        <position position="307"/>
    </location>
    <ligand>
        <name>Mg(2+)</name>
        <dbReference type="ChEBI" id="CHEBI:18420"/>
    </ligand>
</feature>
<feature type="binding site" evidence="2">
    <location>
        <position position="308"/>
    </location>
    <ligand>
        <name>(2R)-3-phosphoglycerate</name>
        <dbReference type="ChEBI" id="CHEBI:58272"/>
    </ligand>
</feature>
<feature type="binding site" evidence="3">
    <location>
        <position position="308"/>
    </location>
    <ligand>
        <name>AMP</name>
        <dbReference type="ChEBI" id="CHEBI:456215"/>
    </ligand>
</feature>
<feature type="binding site" evidence="1">
    <location>
        <position position="311"/>
    </location>
    <ligand>
        <name>CDP</name>
        <dbReference type="ChEBI" id="CHEBI:58069"/>
    </ligand>
</feature>
<feature type="binding site" evidence="1">
    <location>
        <position position="311"/>
    </location>
    <ligand>
        <name>Mg(2+)</name>
        <dbReference type="ChEBI" id="CHEBI:18420"/>
    </ligand>
</feature>
<feature type="binding site" evidence="2">
    <location>
        <position position="312"/>
    </location>
    <ligand>
        <name>ADP</name>
        <dbReference type="ChEBI" id="CHEBI:456216"/>
    </ligand>
</feature>
<feature type="binding site" evidence="3">
    <location>
        <position position="312"/>
    </location>
    <ligand>
        <name>AMP</name>
        <dbReference type="ChEBI" id="CHEBI:456215"/>
    </ligand>
</feature>
<feature type="binding site" evidence="3">
    <location>
        <position position="312"/>
    </location>
    <ligand>
        <name>ATP</name>
        <dbReference type="ChEBI" id="CHEBI:30616"/>
    </ligand>
</feature>
<feature type="binding site" evidence="1">
    <location>
        <position position="330"/>
    </location>
    <ligand>
        <name>ADP</name>
        <dbReference type="ChEBI" id="CHEBI:456216"/>
    </ligand>
</feature>
<feature type="binding site" evidence="1">
    <location>
        <position position="330"/>
    </location>
    <ligand>
        <name>CDP</name>
        <dbReference type="ChEBI" id="CHEBI:58069"/>
    </ligand>
</feature>
<feature type="binding site" evidence="3">
    <location>
        <position position="331"/>
    </location>
    <ligand>
        <name>AMP</name>
        <dbReference type="ChEBI" id="CHEBI:456215"/>
    </ligand>
</feature>
<feature type="binding site" evidence="3">
    <location>
        <position position="331"/>
    </location>
    <ligand>
        <name>ATP</name>
        <dbReference type="ChEBI" id="CHEBI:30616"/>
    </ligand>
</feature>
<feature type="binding site" evidence="2">
    <location>
        <position position="403"/>
    </location>
    <ligand>
        <name>ADP</name>
        <dbReference type="ChEBI" id="CHEBI:456216"/>
    </ligand>
</feature>
<feature type="binding site" evidence="3">
    <location>
        <position position="403"/>
    </location>
    <ligand>
        <name>AMP</name>
        <dbReference type="ChEBI" id="CHEBI:456215"/>
    </ligand>
</feature>
<feature type="binding site" evidence="3">
    <location>
        <position position="403"/>
    </location>
    <ligand>
        <name>ATP</name>
        <dbReference type="ChEBI" id="CHEBI:30616"/>
    </ligand>
</feature>
<feature type="binding site" evidence="2">
    <location>
        <position position="427"/>
    </location>
    <ligand>
        <name>ADP</name>
        <dbReference type="ChEBI" id="CHEBI:456216"/>
    </ligand>
</feature>
<feature type="binding site" evidence="1">
    <location>
        <position position="428"/>
    </location>
    <ligand>
        <name>CDP</name>
        <dbReference type="ChEBI" id="CHEBI:58069"/>
    </ligand>
</feature>
<feature type="binding site" evidence="1">
    <location>
        <position position="433"/>
    </location>
    <ligand>
        <name>ADP</name>
        <dbReference type="ChEBI" id="CHEBI:456216"/>
    </ligand>
</feature>
<feature type="binding site" evidence="1">
    <location>
        <position position="433"/>
    </location>
    <ligand>
        <name>CDP</name>
        <dbReference type="ChEBI" id="CHEBI:58069"/>
    </ligand>
</feature>
<feature type="binding site" evidence="2">
    <location>
        <position position="434"/>
    </location>
    <ligand>
        <name>ADP</name>
        <dbReference type="ChEBI" id="CHEBI:456216"/>
    </ligand>
</feature>
<feature type="binding site" evidence="3">
    <location>
        <position position="434"/>
    </location>
    <ligand>
        <name>AMP</name>
        <dbReference type="ChEBI" id="CHEBI:456215"/>
    </ligand>
</feature>
<feature type="binding site" evidence="3">
    <location>
        <position position="434"/>
    </location>
    <ligand>
        <name>ATP</name>
        <dbReference type="ChEBI" id="CHEBI:30616"/>
    </ligand>
</feature>
<feature type="binding site" evidence="2">
    <location>
        <position position="466"/>
    </location>
    <ligand>
        <name>ADP</name>
        <dbReference type="ChEBI" id="CHEBI:456216"/>
    </ligand>
</feature>
<feature type="binding site" evidence="3">
    <location>
        <position position="466"/>
    </location>
    <ligand>
        <name>ATP</name>
        <dbReference type="ChEBI" id="CHEBI:30616"/>
    </ligand>
</feature>
<feature type="binding site" evidence="3">
    <location>
        <position position="466"/>
    </location>
    <ligand>
        <name>Mg(2+)</name>
        <dbReference type="ChEBI" id="CHEBI:18420"/>
    </ligand>
</feature>
<feature type="binding site" evidence="2">
    <location>
        <position position="467"/>
    </location>
    <ligand>
        <name>ADP</name>
        <dbReference type="ChEBI" id="CHEBI:456216"/>
    </ligand>
</feature>
<feature type="binding site" evidence="3">
    <location>
        <position position="467"/>
    </location>
    <ligand>
        <name>ATP</name>
        <dbReference type="ChEBI" id="CHEBI:30616"/>
    </ligand>
</feature>
<evidence type="ECO:0000250" key="1">
    <source>
        <dbReference type="UniProtKB" id="P00558"/>
    </source>
</evidence>
<evidence type="ECO:0000250" key="2">
    <source>
        <dbReference type="UniProtKB" id="P07378"/>
    </source>
</evidence>
<evidence type="ECO:0000250" key="3">
    <source>
        <dbReference type="UniProtKB" id="Q7SIB7"/>
    </source>
</evidence>
<evidence type="ECO:0000305" key="4"/>